<reference key="1">
    <citation type="journal article" date="1997" name="Gene">
        <title>Sequencing and phylogenetic analysis of the spoIIA operon from diverse Bacillus and Paenibacillus species.</title>
        <authorList>
            <person name="Park S.G."/>
            <person name="Yudkin M.D."/>
        </authorList>
    </citation>
    <scope>NUCLEOTIDE SEQUENCE [GENOMIC DNA]</scope>
    <source>
        <strain>2362</strain>
    </source>
</reference>
<reference key="2">
    <citation type="journal article" date="2001" name="Structure">
        <title>Structure of the Bacillus cell fate determinant SpoIIAA in phosphorylated and unphosphorylated forms.</title>
        <authorList>
            <person name="Seavers P.R."/>
            <person name="Lewis R.J."/>
            <person name="Brannigan J.A."/>
            <person name="Verschueren K.H."/>
            <person name="Murshudov G.N."/>
            <person name="Wilkinson A.J."/>
        </authorList>
    </citation>
    <scope>X-RAY CRYSTALLOGRAPHY (1.61 ANGSTROMS)</scope>
    <scope>PHOSPHORYLATION AT SER-58</scope>
</reference>
<feature type="chain" id="PRO_0000194202" description="Anti-sigma F factor antagonist">
    <location>
        <begin position="1"/>
        <end position="117"/>
    </location>
</feature>
<feature type="domain" description="STAS" evidence="2">
    <location>
        <begin position="2"/>
        <end position="115"/>
    </location>
</feature>
<feature type="modified residue" description="Phosphoserine" evidence="3">
    <location>
        <position position="58"/>
    </location>
</feature>
<feature type="strand" evidence="5">
    <location>
        <begin position="3"/>
        <end position="9"/>
    </location>
</feature>
<feature type="strand" evidence="5">
    <location>
        <begin position="12"/>
        <end position="21"/>
    </location>
</feature>
<feature type="helix" evidence="5">
    <location>
        <begin position="23"/>
        <end position="38"/>
    </location>
</feature>
<feature type="strand" evidence="5">
    <location>
        <begin position="43"/>
        <end position="55"/>
    </location>
</feature>
<feature type="helix" evidence="5">
    <location>
        <begin position="58"/>
        <end position="71"/>
    </location>
</feature>
<feature type="turn" evidence="5">
    <location>
        <begin position="72"/>
        <end position="74"/>
    </location>
</feature>
<feature type="strand" evidence="5">
    <location>
        <begin position="76"/>
        <end position="81"/>
    </location>
</feature>
<feature type="helix" evidence="5">
    <location>
        <begin position="84"/>
        <end position="92"/>
    </location>
</feature>
<feature type="helix" evidence="5">
    <location>
        <begin position="96"/>
        <end position="98"/>
    </location>
</feature>
<feature type="helix" evidence="5">
    <location>
        <begin position="104"/>
        <end position="110"/>
    </location>
</feature>
<evidence type="ECO:0000250" key="1"/>
<evidence type="ECO:0000255" key="2">
    <source>
        <dbReference type="PROSITE-ProRule" id="PRU00198"/>
    </source>
</evidence>
<evidence type="ECO:0000269" key="3">
    <source>
    </source>
</evidence>
<evidence type="ECO:0000305" key="4"/>
<evidence type="ECO:0007829" key="5">
    <source>
        <dbReference type="PDB" id="1H4X"/>
    </source>
</evidence>
<keyword id="KW-0002">3D-structure</keyword>
<keyword id="KW-0597">Phosphoprotein</keyword>
<keyword id="KW-0749">Sporulation</keyword>
<comment type="function">
    <text evidence="1">In the phosphorylated form it could act as an anti-anti-sigma factor that counteracts SpoIIAB and thus releases sigma f from inhibition.</text>
</comment>
<comment type="PTM">
    <text evidence="1">Phosphorylated by SpoIIAB on a serine residue.</text>
</comment>
<comment type="similarity">
    <text evidence="4">Belongs to the anti-sigma-factor antagonist family.</text>
</comment>
<sequence>MHFQLEMVTRETVVIRLFGELDHHAVEQIRAKISAAIFQGTVTTIIWNLEGLSFMDSSGVGLVLGRMRELEAVAGRTILLNPSPTMRKVFQFSGLGPWMMDATEEQAIDRVRGIVNG</sequence>
<organism>
    <name type="scientific">Lysinibacillus sphaericus</name>
    <name type="common">Bacillus sphaericus</name>
    <dbReference type="NCBI Taxonomy" id="1421"/>
    <lineage>
        <taxon>Bacteria</taxon>
        <taxon>Bacillati</taxon>
        <taxon>Bacillota</taxon>
        <taxon>Bacilli</taxon>
        <taxon>Bacillales</taxon>
        <taxon>Bacillaceae</taxon>
        <taxon>Lysinibacillus</taxon>
    </lineage>
</organism>
<gene>
    <name type="primary">spoIIAA</name>
</gene>
<accession>O32723</accession>
<dbReference type="EMBL" id="L47359">
    <property type="protein sequence ID" value="AAB81189.1"/>
    <property type="molecule type" value="Genomic_DNA"/>
</dbReference>
<dbReference type="RefSeq" id="WP_025114066.1">
    <property type="nucleotide sequence ID" value="NZ_PEKE01000001.1"/>
</dbReference>
<dbReference type="PDB" id="1H4X">
    <property type="method" value="X-ray"/>
    <property type="resolution" value="1.16 A"/>
    <property type="chains" value="A/B=1-117"/>
</dbReference>
<dbReference type="PDB" id="1H4Y">
    <property type="method" value="X-ray"/>
    <property type="resolution" value="1.61 A"/>
    <property type="chains" value="A/B=1-117"/>
</dbReference>
<dbReference type="PDB" id="1H4Z">
    <property type="method" value="X-ray"/>
    <property type="resolution" value="2.74 A"/>
    <property type="chains" value="A=1-117"/>
</dbReference>
<dbReference type="PDBsum" id="1H4X"/>
<dbReference type="PDBsum" id="1H4Y"/>
<dbReference type="PDBsum" id="1H4Z"/>
<dbReference type="SMR" id="O32723"/>
<dbReference type="STRING" id="1421.A2J09_02155"/>
<dbReference type="DrugBank" id="DB04522">
    <property type="generic name" value="Dexfosfoserine"/>
</dbReference>
<dbReference type="iPTMnet" id="O32723"/>
<dbReference type="GeneID" id="29441082"/>
<dbReference type="PATRIC" id="fig|1421.29.peg.4416"/>
<dbReference type="EvolutionaryTrace" id="O32723"/>
<dbReference type="GO" id="GO:0043856">
    <property type="term" value="F:anti-sigma factor antagonist activity"/>
    <property type="evidence" value="ECO:0007669"/>
    <property type="project" value="InterPro"/>
</dbReference>
<dbReference type="GO" id="GO:0045152">
    <property type="term" value="F:antisigma factor binding"/>
    <property type="evidence" value="ECO:0007669"/>
    <property type="project" value="InterPro"/>
</dbReference>
<dbReference type="GO" id="GO:0030435">
    <property type="term" value="P:sporulation resulting in formation of a cellular spore"/>
    <property type="evidence" value="ECO:0007669"/>
    <property type="project" value="UniProtKB-KW"/>
</dbReference>
<dbReference type="CDD" id="cd06844">
    <property type="entry name" value="STAS"/>
    <property type="match status" value="1"/>
</dbReference>
<dbReference type="Gene3D" id="3.30.750.24">
    <property type="entry name" value="STAS domain"/>
    <property type="match status" value="1"/>
</dbReference>
<dbReference type="InterPro" id="IPR003658">
    <property type="entry name" value="Anti-sigma_ant"/>
</dbReference>
<dbReference type="InterPro" id="IPR014237">
    <property type="entry name" value="Anti-sigma_F_ant"/>
</dbReference>
<dbReference type="InterPro" id="IPR002645">
    <property type="entry name" value="STAS_dom"/>
</dbReference>
<dbReference type="InterPro" id="IPR036513">
    <property type="entry name" value="STAS_dom_sf"/>
</dbReference>
<dbReference type="NCBIfam" id="TIGR00377">
    <property type="entry name" value="ant_ant_sig"/>
    <property type="match status" value="1"/>
</dbReference>
<dbReference type="NCBIfam" id="TIGR02886">
    <property type="entry name" value="spore_II_AA"/>
    <property type="match status" value="1"/>
</dbReference>
<dbReference type="PANTHER" id="PTHR33495:SF2">
    <property type="entry name" value="ANTI-SIGMA FACTOR ANTAGONIST TM_1081-RELATED"/>
    <property type="match status" value="1"/>
</dbReference>
<dbReference type="PANTHER" id="PTHR33495">
    <property type="entry name" value="ANTI-SIGMA FACTOR ANTAGONIST TM_1081-RELATED-RELATED"/>
    <property type="match status" value="1"/>
</dbReference>
<dbReference type="Pfam" id="PF01740">
    <property type="entry name" value="STAS"/>
    <property type="match status" value="1"/>
</dbReference>
<dbReference type="SUPFAM" id="SSF52091">
    <property type="entry name" value="SpoIIaa-like"/>
    <property type="match status" value="1"/>
</dbReference>
<dbReference type="PROSITE" id="PS50801">
    <property type="entry name" value="STAS"/>
    <property type="match status" value="1"/>
</dbReference>
<name>SP2AA_LYSSH</name>
<proteinExistence type="evidence at protein level"/>
<protein>
    <recommendedName>
        <fullName>Anti-sigma F factor antagonist</fullName>
    </recommendedName>
    <alternativeName>
        <fullName>Stage II sporulation protein AA</fullName>
    </alternativeName>
</protein>